<name>VE7_HPV32</name>
<sequence>MRGNAPTLKDIILYDLPTCDPTTCDTPPVDLYCYEQFDTSDEDDEDDDQPIKQDIQRYRIVCGCTQCGRSVKLVVSSTGADIQQLHQMLLDTLGIVCPLCACVE</sequence>
<keyword id="KW-0010">Activator</keyword>
<keyword id="KW-0238">DNA-binding</keyword>
<keyword id="KW-0244">Early protein</keyword>
<keyword id="KW-1078">G1/S host cell cycle checkpoint dysregulation by virus</keyword>
<keyword id="KW-1035">Host cytoplasm</keyword>
<keyword id="KW-1048">Host nucleus</keyword>
<keyword id="KW-0945">Host-virus interaction</keyword>
<keyword id="KW-1090">Inhibition of host innate immune response by virus</keyword>
<keyword id="KW-1114">Inhibition of host interferon signaling pathway by virus</keyword>
<keyword id="KW-0922">Interferon antiviral system evasion</keyword>
<keyword id="KW-0479">Metal-binding</keyword>
<keyword id="KW-1121">Modulation of host cell cycle by virus</keyword>
<keyword id="KW-0553">Oncogene</keyword>
<keyword id="KW-1185">Reference proteome</keyword>
<keyword id="KW-0804">Transcription</keyword>
<keyword id="KW-0805">Transcription regulation</keyword>
<keyword id="KW-0899">Viral immunoevasion</keyword>
<keyword id="KW-0862">Zinc</keyword>
<keyword id="KW-0863">Zinc-finger</keyword>
<proteinExistence type="inferred from homology"/>
<organismHost>
    <name type="scientific">Homo sapiens</name>
    <name type="common">Human</name>
    <dbReference type="NCBI Taxonomy" id="9606"/>
</organismHost>
<dbReference type="EMBL" id="X74475">
    <property type="protein sequence ID" value="CAA52550.1"/>
    <property type="molecule type" value="Genomic_DNA"/>
</dbReference>
<dbReference type="PIR" id="S36510">
    <property type="entry name" value="S36510"/>
</dbReference>
<dbReference type="RefSeq" id="NP_041802.1">
    <property type="nucleotide sequence ID" value="NC_001586.1"/>
</dbReference>
<dbReference type="SMR" id="P36827"/>
<dbReference type="BioGRID" id="4263571">
    <property type="interactions" value="45"/>
</dbReference>
<dbReference type="IntAct" id="P36827">
    <property type="interactions" value="33"/>
</dbReference>
<dbReference type="MINT" id="P36827"/>
<dbReference type="GeneID" id="1489425"/>
<dbReference type="KEGG" id="vg:1489425"/>
<dbReference type="OrthoDB" id="28045at10239"/>
<dbReference type="Proteomes" id="UP000009117">
    <property type="component" value="Genome"/>
</dbReference>
<dbReference type="GO" id="GO:0030430">
    <property type="term" value="C:host cell cytoplasm"/>
    <property type="evidence" value="ECO:0007669"/>
    <property type="project" value="UniProtKB-SubCell"/>
</dbReference>
<dbReference type="GO" id="GO:0042025">
    <property type="term" value="C:host cell nucleus"/>
    <property type="evidence" value="ECO:0007669"/>
    <property type="project" value="UniProtKB-SubCell"/>
</dbReference>
<dbReference type="GO" id="GO:0003677">
    <property type="term" value="F:DNA binding"/>
    <property type="evidence" value="ECO:0007669"/>
    <property type="project" value="UniProtKB-UniRule"/>
</dbReference>
<dbReference type="GO" id="GO:0003700">
    <property type="term" value="F:DNA-binding transcription factor activity"/>
    <property type="evidence" value="ECO:0007669"/>
    <property type="project" value="UniProtKB-UniRule"/>
</dbReference>
<dbReference type="GO" id="GO:0019904">
    <property type="term" value="F:protein domain specific binding"/>
    <property type="evidence" value="ECO:0007669"/>
    <property type="project" value="UniProtKB-UniRule"/>
</dbReference>
<dbReference type="GO" id="GO:0008270">
    <property type="term" value="F:zinc ion binding"/>
    <property type="evidence" value="ECO:0007669"/>
    <property type="project" value="UniProtKB-KW"/>
</dbReference>
<dbReference type="GO" id="GO:0006351">
    <property type="term" value="P:DNA-templated transcription"/>
    <property type="evidence" value="ECO:0007669"/>
    <property type="project" value="UniProtKB-UniRule"/>
</dbReference>
<dbReference type="GO" id="GO:0039645">
    <property type="term" value="P:symbiont-mediated perturbation of host cell cycle G1/S transition checkpoint"/>
    <property type="evidence" value="ECO:0007669"/>
    <property type="project" value="UniProtKB-UniRule"/>
</dbReference>
<dbReference type="GO" id="GO:0052170">
    <property type="term" value="P:symbiont-mediated suppression of host innate immune response"/>
    <property type="evidence" value="ECO:0007669"/>
    <property type="project" value="UniProtKB-KW"/>
</dbReference>
<dbReference type="GO" id="GO:0039502">
    <property type="term" value="P:symbiont-mediated suppression of host type I interferon-mediated signaling pathway"/>
    <property type="evidence" value="ECO:0007669"/>
    <property type="project" value="UniProtKB-UniRule"/>
</dbReference>
<dbReference type="Gene3D" id="3.30.160.330">
    <property type="match status" value="1"/>
</dbReference>
<dbReference type="HAMAP" id="MF_04004">
    <property type="entry name" value="PPV_E7"/>
    <property type="match status" value="1"/>
</dbReference>
<dbReference type="InterPro" id="IPR000148">
    <property type="entry name" value="Papilloma_E7"/>
</dbReference>
<dbReference type="Pfam" id="PF00527">
    <property type="entry name" value="E7"/>
    <property type="match status" value="1"/>
</dbReference>
<dbReference type="PIRSF" id="PIRSF003407">
    <property type="entry name" value="Papvi_E7"/>
    <property type="match status" value="1"/>
</dbReference>
<dbReference type="SUPFAM" id="SSF161234">
    <property type="entry name" value="E7 C-terminal domain-like"/>
    <property type="match status" value="1"/>
</dbReference>
<protein>
    <recommendedName>
        <fullName evidence="1">Protein E7</fullName>
    </recommendedName>
</protein>
<evidence type="ECO:0000255" key="1">
    <source>
        <dbReference type="HAMAP-Rule" id="MF_04004"/>
    </source>
</evidence>
<reference key="1">
    <citation type="journal article" date="1994" name="Curr. Top. Microbiol. Immunol.">
        <title>Primer-directed sequencing of human papillomavirus types.</title>
        <authorList>
            <person name="Delius H."/>
            <person name="Hofmann B."/>
        </authorList>
    </citation>
    <scope>NUCLEOTIDE SEQUENCE [GENOMIC DNA]</scope>
</reference>
<reference key="2">
    <citation type="journal article" date="2002" name="Rev. Med. Virol.">
        <title>Interactions of SV40 large T antigen and other viral proteins with retinoblastoma tumour suppressor.</title>
        <authorList>
            <person name="Lee C."/>
            <person name="Cho Y."/>
        </authorList>
    </citation>
    <scope>REVIEW</scope>
</reference>
<accession>P36827</accession>
<comment type="function">
    <text evidence="1">Plays a role in viral genome replication by driving entry of quiescent cells into the cell cycle. Stimulation of progression from G1 to S phase allows the virus to efficiently use the cellular DNA replicating machinery to achieve viral genome replication. E7 protein has both transforming and trans-activating activities. Induces the disassembly of the E2F1 transcription factor from RB1, with subsequent transcriptional activation of E2F1-regulated S-phase genes. Interferes with host histone deacetylation mediated by HDAC1 and HDAC2, leading to transcription activation. Also plays a role in the inhibition of both antiviral and antiproliferative functions of host interferon alpha. Interaction with host TMEM173/STING impairs the ability of TMEM173/STING to sense cytosolic DNA and promote the production of type I interferon (IFN-alpha and IFN-beta).</text>
</comment>
<comment type="subunit">
    <text evidence="1">Homodimer. Homooligomer. Interacts with host RB1; this interaction induces dissociation of RB1-E2F1 complex thereby disrupting RB1 activity. Interacts with host EP300; this interaction represses EP300 transcriptional activity. Interacts with protein E2; this interaction inhibits E7 oncogenic activity. Interacts with host TMEM173/STING; this interaction impairs the ability of TMEM173/STING to sense cytosolic DNA and promote the production of type I interferon (IFN-alpha and IFN-beta).</text>
</comment>
<comment type="subcellular location">
    <subcellularLocation>
        <location evidence="1">Host cytoplasm</location>
    </subcellularLocation>
    <subcellularLocation>
        <location evidence="1">Host nucleus</location>
    </subcellularLocation>
    <text evidence="1">Predominantly found in the host nucleus.</text>
</comment>
<comment type="domain">
    <text evidence="1">The E7 terminal domain is an intrinsically disordered domain, whose flexibility and conformational transitions confer target adaptability to the oncoprotein. It allows adaptation to a variety of protein targets and exposes the PEST degradation sequence that regulates its turnover in the cell.</text>
</comment>
<comment type="PTM">
    <text evidence="1">Highly phosphorylated.</text>
</comment>
<comment type="similarity">
    <text evidence="1">Belongs to the papillomaviridae E7 protein family.</text>
</comment>
<feature type="chain" id="PRO_0000133430" description="Protein E7">
    <location>
        <begin position="1"/>
        <end position="104"/>
    </location>
</feature>
<feature type="zinc finger region" evidence="1">
    <location>
        <begin position="64"/>
        <end position="100"/>
    </location>
</feature>
<feature type="region of interest" description="E7 terminal domain" evidence="1">
    <location>
        <begin position="1"/>
        <end position="49"/>
    </location>
</feature>
<feature type="short sequence motif" description="LXCXE motif; interaction with host RB1 and TMEM173/STING" evidence="1">
    <location>
        <begin position="31"/>
        <end position="35"/>
    </location>
</feature>
<feature type="short sequence motif" description="Nuclear export signal" evidence="1">
    <location>
        <begin position="82"/>
        <end position="90"/>
    </location>
</feature>
<gene>
    <name evidence="1" type="primary">E7</name>
</gene>
<organism>
    <name type="scientific">Human papillomavirus type 32</name>
    <dbReference type="NCBI Taxonomy" id="333763"/>
    <lineage>
        <taxon>Viruses</taxon>
        <taxon>Monodnaviria</taxon>
        <taxon>Shotokuvirae</taxon>
        <taxon>Cossaviricota</taxon>
        <taxon>Papovaviricetes</taxon>
        <taxon>Zurhausenvirales</taxon>
        <taxon>Papillomaviridae</taxon>
        <taxon>Firstpapillomavirinae</taxon>
        <taxon>Alphapapillomavirus</taxon>
        <taxon>Alphapapillomavirus 1</taxon>
    </lineage>
</organism>